<organism>
    <name type="scientific">Burkholderia cenocepacia (strain ATCC BAA-245 / DSM 16553 / LMG 16656 / NCTC 13227 / J2315 / CF5610)</name>
    <name type="common">Burkholderia cepacia (strain J2315)</name>
    <dbReference type="NCBI Taxonomy" id="216591"/>
    <lineage>
        <taxon>Bacteria</taxon>
        <taxon>Pseudomonadati</taxon>
        <taxon>Pseudomonadota</taxon>
        <taxon>Betaproteobacteria</taxon>
        <taxon>Burkholderiales</taxon>
        <taxon>Burkholderiaceae</taxon>
        <taxon>Burkholderia</taxon>
        <taxon>Burkholderia cepacia complex</taxon>
    </lineage>
</organism>
<reference key="1">
    <citation type="journal article" date="2009" name="J. Bacteriol.">
        <title>The genome of Burkholderia cenocepacia J2315, an epidemic pathogen of cystic fibrosis patients.</title>
        <authorList>
            <person name="Holden M.T."/>
            <person name="Seth-Smith H.M."/>
            <person name="Crossman L.C."/>
            <person name="Sebaihia M."/>
            <person name="Bentley S.D."/>
            <person name="Cerdeno-Tarraga A.M."/>
            <person name="Thomson N.R."/>
            <person name="Bason N."/>
            <person name="Quail M.A."/>
            <person name="Sharp S."/>
            <person name="Cherevach I."/>
            <person name="Churcher C."/>
            <person name="Goodhead I."/>
            <person name="Hauser H."/>
            <person name="Holroyd N."/>
            <person name="Mungall K."/>
            <person name="Scott P."/>
            <person name="Walker D."/>
            <person name="White B."/>
            <person name="Rose H."/>
            <person name="Iversen P."/>
            <person name="Mil-Homens D."/>
            <person name="Rocha E.P."/>
            <person name="Fialho A.M."/>
            <person name="Baldwin A."/>
            <person name="Dowson C."/>
            <person name="Barrell B.G."/>
            <person name="Govan J.R."/>
            <person name="Vandamme P."/>
            <person name="Hart C.A."/>
            <person name="Mahenthiralingam E."/>
            <person name="Parkhill J."/>
        </authorList>
    </citation>
    <scope>NUCLEOTIDE SEQUENCE [LARGE SCALE GENOMIC DNA]</scope>
    <source>
        <strain>ATCC BAA-245 / DSM 16553 / LMG 16656 / NCTC 13227 / J2315 / CF5610</strain>
    </source>
</reference>
<feature type="chain" id="PRO_1000095450" description="ATP phosphoribosyltransferase regulatory subunit">
    <location>
        <begin position="1"/>
        <end position="382"/>
    </location>
</feature>
<keyword id="KW-0028">Amino-acid biosynthesis</keyword>
<keyword id="KW-0963">Cytoplasm</keyword>
<keyword id="KW-0368">Histidine biosynthesis</keyword>
<evidence type="ECO:0000255" key="1">
    <source>
        <dbReference type="HAMAP-Rule" id="MF_00125"/>
    </source>
</evidence>
<gene>
    <name evidence="1" type="primary">hisZ</name>
    <name type="ordered locus">BceJ2315_18370</name>
    <name type="ORF">BCAL1874</name>
</gene>
<accession>B4EAH3</accession>
<protein>
    <recommendedName>
        <fullName evidence="1">ATP phosphoribosyltransferase regulatory subunit</fullName>
    </recommendedName>
</protein>
<proteinExistence type="inferred from homology"/>
<comment type="function">
    <text evidence="1">Required for the first step of histidine biosynthesis. May allow the feedback regulation of ATP phosphoribosyltransferase activity by histidine.</text>
</comment>
<comment type="pathway">
    <text evidence="1">Amino-acid biosynthesis; L-histidine biosynthesis; L-histidine from 5-phospho-alpha-D-ribose 1-diphosphate: step 1/9.</text>
</comment>
<comment type="subunit">
    <text evidence="1">Heteromultimer composed of HisG and HisZ subunits.</text>
</comment>
<comment type="subcellular location">
    <subcellularLocation>
        <location evidence="1">Cytoplasm</location>
    </subcellularLocation>
</comment>
<comment type="miscellaneous">
    <text>This function is generally fulfilled by the C-terminal part of HisG, which is missing in some bacteria such as this one.</text>
</comment>
<comment type="similarity">
    <text evidence="1">Belongs to the class-II aminoacyl-tRNA synthetase family. HisZ subfamily.</text>
</comment>
<sequence>MSTWLLPENIADVLPSEARKIEELRRRLLDRFRSYGYEMVMPPLLEYLESLLTSGGADLRLRTFKLVDQLSGRTLGLRADITPQVARIDAHLLNRQGVTRLCYAGHVMHTRPRGLHATREQIQIGAEIYGHAGLEADLEIQQLMLDALHLAGLSRIRLDLGHAGVLAALLARDAQAAERGESLYDALSGKDVPLLNELTDDLGADTRAALRALPNLYGDASVLAEARTRLPVLPEITRALDDLAQLASQPKGVEVAIDLADLRGYAYHSGAMFSAYIDGVPNAIARGGRYDHVGQAYGRARPATGFSLDLRELARISPVEARGTAILAPWAQDDALGAAVAALRDAGEVVIQALPGHDHVLDEFACDRSLVERNGAWVVEPR</sequence>
<dbReference type="EMBL" id="AM747720">
    <property type="protein sequence ID" value="CAR52174.1"/>
    <property type="molecule type" value="Genomic_DNA"/>
</dbReference>
<dbReference type="RefSeq" id="WP_006485900.1">
    <property type="nucleotide sequence ID" value="NC_011000.1"/>
</dbReference>
<dbReference type="SMR" id="B4EAH3"/>
<dbReference type="KEGG" id="bcj:BCAL1874"/>
<dbReference type="eggNOG" id="COG3705">
    <property type="taxonomic scope" value="Bacteria"/>
</dbReference>
<dbReference type="HOGENOM" id="CLU_025113_0_1_4"/>
<dbReference type="BioCyc" id="BCEN216591:G1G1V-2065-MONOMER"/>
<dbReference type="UniPathway" id="UPA00031">
    <property type="reaction ID" value="UER00006"/>
</dbReference>
<dbReference type="Proteomes" id="UP000001035">
    <property type="component" value="Chromosome 1"/>
</dbReference>
<dbReference type="GO" id="GO:0005737">
    <property type="term" value="C:cytoplasm"/>
    <property type="evidence" value="ECO:0007669"/>
    <property type="project" value="UniProtKB-SubCell"/>
</dbReference>
<dbReference type="GO" id="GO:0004821">
    <property type="term" value="F:histidine-tRNA ligase activity"/>
    <property type="evidence" value="ECO:0007669"/>
    <property type="project" value="TreeGrafter"/>
</dbReference>
<dbReference type="GO" id="GO:0006427">
    <property type="term" value="P:histidyl-tRNA aminoacylation"/>
    <property type="evidence" value="ECO:0007669"/>
    <property type="project" value="TreeGrafter"/>
</dbReference>
<dbReference type="GO" id="GO:0000105">
    <property type="term" value="P:L-histidine biosynthetic process"/>
    <property type="evidence" value="ECO:0007669"/>
    <property type="project" value="UniProtKB-UniRule"/>
</dbReference>
<dbReference type="CDD" id="cd00773">
    <property type="entry name" value="HisRS-like_core"/>
    <property type="match status" value="1"/>
</dbReference>
<dbReference type="Gene3D" id="3.30.930.10">
    <property type="entry name" value="Bira Bifunctional Protein, Domain 2"/>
    <property type="match status" value="1"/>
</dbReference>
<dbReference type="HAMAP" id="MF_00125">
    <property type="entry name" value="HisZ"/>
    <property type="match status" value="1"/>
</dbReference>
<dbReference type="InterPro" id="IPR045864">
    <property type="entry name" value="aa-tRNA-synth_II/BPL/LPL"/>
</dbReference>
<dbReference type="InterPro" id="IPR041715">
    <property type="entry name" value="HisRS-like_core"/>
</dbReference>
<dbReference type="InterPro" id="IPR004516">
    <property type="entry name" value="HisRS/HisZ"/>
</dbReference>
<dbReference type="InterPro" id="IPR004517">
    <property type="entry name" value="HisZ"/>
</dbReference>
<dbReference type="NCBIfam" id="TIGR00443">
    <property type="entry name" value="hisZ_biosyn_reg"/>
    <property type="match status" value="1"/>
</dbReference>
<dbReference type="NCBIfam" id="NF008935">
    <property type="entry name" value="PRK12292.1-1"/>
    <property type="match status" value="1"/>
</dbReference>
<dbReference type="NCBIfam" id="NF009086">
    <property type="entry name" value="PRK12421.1"/>
    <property type="match status" value="1"/>
</dbReference>
<dbReference type="PANTHER" id="PTHR43707:SF1">
    <property type="entry name" value="HISTIDINE--TRNA LIGASE, MITOCHONDRIAL-RELATED"/>
    <property type="match status" value="1"/>
</dbReference>
<dbReference type="PANTHER" id="PTHR43707">
    <property type="entry name" value="HISTIDYL-TRNA SYNTHETASE"/>
    <property type="match status" value="1"/>
</dbReference>
<dbReference type="Pfam" id="PF13393">
    <property type="entry name" value="tRNA-synt_His"/>
    <property type="match status" value="1"/>
</dbReference>
<dbReference type="PIRSF" id="PIRSF001549">
    <property type="entry name" value="His-tRNA_synth"/>
    <property type="match status" value="1"/>
</dbReference>
<dbReference type="SUPFAM" id="SSF55681">
    <property type="entry name" value="Class II aaRS and biotin synthetases"/>
    <property type="match status" value="1"/>
</dbReference>
<name>HISZ_BURCJ</name>